<name>SSG1_AEGTS</name>
<comment type="catalytic activity">
    <reaction evidence="2">
        <text>an NDP-alpha-D-glucose + [(1-&gt;4)-alpha-D-glucosyl](n) = [(1-&gt;4)-alpha-D-glucosyl](n+1) + a ribonucleoside 5'-diphosphate + H(+)</text>
        <dbReference type="Rhea" id="RHEA:15873"/>
        <dbReference type="Rhea" id="RHEA-COMP:9584"/>
        <dbReference type="Rhea" id="RHEA-COMP:9587"/>
        <dbReference type="ChEBI" id="CHEBI:15378"/>
        <dbReference type="ChEBI" id="CHEBI:15444"/>
        <dbReference type="ChEBI" id="CHEBI:57930"/>
        <dbReference type="ChEBI" id="CHEBI:76533"/>
        <dbReference type="EC" id="2.4.1.242"/>
    </reaction>
</comment>
<comment type="pathway">
    <text>Glycan biosynthesis; starch biosynthesis.</text>
</comment>
<comment type="subcellular location">
    <subcellularLocation>
        <location evidence="1">Plastid</location>
        <location evidence="1">Chloroplast</location>
    </subcellularLocation>
    <subcellularLocation>
        <location evidence="1">Plastid</location>
        <location evidence="1">Amyloplast</location>
    </subcellularLocation>
    <text evidence="1">Amyloplast or chloroplast, granule-bound.</text>
</comment>
<comment type="similarity">
    <text evidence="3">Belongs to the glycosyltransferase 1 family. Bacterial/plant glycogen synthase subfamily.</text>
</comment>
<protein>
    <recommendedName>
        <fullName>Granule-bound starch synthase 1</fullName>
        <ecNumber>2.4.1.242</ecNumber>
    </recommendedName>
    <alternativeName>
        <fullName>Granule-bound starch synthase I</fullName>
        <shortName>GBSS-I</shortName>
    </alternativeName>
</protein>
<keyword id="KW-0035">Amyloplast</keyword>
<keyword id="KW-0150">Chloroplast</keyword>
<keyword id="KW-0903">Direct protein sequencing</keyword>
<keyword id="KW-0328">Glycosyltransferase</keyword>
<keyword id="KW-0934">Plastid</keyword>
<keyword id="KW-1185">Reference proteome</keyword>
<keyword id="KW-0750">Starch biosynthesis</keyword>
<keyword id="KW-0808">Transferase</keyword>
<feature type="chain" id="PRO_0000223522" description="Granule-bound starch synthase 1" evidence="6">
    <location>
        <begin position="1"/>
        <end position="21" status="greater than"/>
    </location>
</feature>
<feature type="non-terminal residue" evidence="5">
    <location>
        <position position="21"/>
    </location>
</feature>
<organism>
    <name type="scientific">Aegilops tauschii subsp. strangulata</name>
    <name type="common">Goatgrass</name>
    <dbReference type="NCBI Taxonomy" id="200361"/>
    <lineage>
        <taxon>Eukaryota</taxon>
        <taxon>Viridiplantae</taxon>
        <taxon>Streptophyta</taxon>
        <taxon>Embryophyta</taxon>
        <taxon>Tracheophyta</taxon>
        <taxon>Spermatophyta</taxon>
        <taxon>Magnoliopsida</taxon>
        <taxon>Liliopsida</taxon>
        <taxon>Poales</taxon>
        <taxon>Poaceae</taxon>
        <taxon>BOP clade</taxon>
        <taxon>Pooideae</taxon>
        <taxon>Triticodae</taxon>
        <taxon>Triticeae</taxon>
        <taxon>Triticinae</taxon>
        <taxon>Aegilops</taxon>
    </lineage>
</organism>
<evidence type="ECO:0000250" key="1"/>
<evidence type="ECO:0000250" key="2">
    <source>
        <dbReference type="UniProtKB" id="P27736"/>
    </source>
</evidence>
<evidence type="ECO:0000255" key="3"/>
<evidence type="ECO:0000269" key="4">
    <source>
    </source>
</evidence>
<evidence type="ECO:0000303" key="5">
    <source>
    </source>
</evidence>
<evidence type="ECO:0000305" key="6"/>
<reference evidence="6" key="1">
    <citation type="journal article" date="1995" name="Biochem. Genet.">
        <title>Variation in the primary structure of waxy proteins (granule-bound starch synthase) in diploid cereals.</title>
        <authorList>
            <person name="Taira T."/>
            <person name="Fujita N."/>
            <person name="Takaoka K."/>
            <person name="Uematsu M."/>
            <person name="Wadano A."/>
            <person name="Kozaki S."/>
            <person name="Okabe S."/>
        </authorList>
    </citation>
    <scope>PROTEIN SEQUENCE</scope>
    <source>
        <tissue evidence="4">Seed</tissue>
    </source>
</reference>
<sequence>ATGSGGMNLVFVGAEMAPXXX</sequence>
<proteinExistence type="evidence at protein level"/>
<accession>P84766</accession>
<accession>Q9S7Q0</accession>
<dbReference type="EC" id="2.4.1.242"/>
<dbReference type="UniPathway" id="UPA00152"/>
<dbReference type="Proteomes" id="UP000015105">
    <property type="component" value="Unplaced"/>
</dbReference>
<dbReference type="GO" id="GO:0009501">
    <property type="term" value="C:amyloplast"/>
    <property type="evidence" value="ECO:0007669"/>
    <property type="project" value="UniProtKB-SubCell"/>
</dbReference>
<dbReference type="GO" id="GO:0009507">
    <property type="term" value="C:chloroplast"/>
    <property type="evidence" value="ECO:0007669"/>
    <property type="project" value="UniProtKB-SubCell"/>
</dbReference>
<dbReference type="GO" id="GO:0033840">
    <property type="term" value="F:alpha-1,4-glucan glucosyltransferase (NDP-glucose donor) activity"/>
    <property type="evidence" value="ECO:0007669"/>
    <property type="project" value="UniProtKB-EC"/>
</dbReference>
<dbReference type="GO" id="GO:0019252">
    <property type="term" value="P:starch biosynthetic process"/>
    <property type="evidence" value="ECO:0007669"/>
    <property type="project" value="UniProtKB-UniPathway"/>
</dbReference>